<accession>Q0AFV7</accession>
<sequence>MYRPIRALIDCTALQHNLSVVRSHTRQARIMAVVKADAYGHGLLRTTQALNTADGFAVLELEAAIQLREAGFNQPVLLLEGFFSAEELEAIDHYQLSTVIHSHEQLSLLLAHRKTGKPDIYLKINTGMNRLGFRPEEESYVFNRIRQWRSDTSITLMTHFSCADDALEADQVNQQLDQFAALHDVKENNLPQTLANSAAILRYPGTHADWVRPGIVLYGASPLPDKTGIELGLRPVMTLTSQIIAVQQLDPSDRVGYGGQFIANQPMRIGVVAAGYADGYPRHAPTGTPVLVNGQRTRLVGRISMDMLTVDLNGISEAGVGSPVTLWGEGLPVEEVAKSAQTISYELLTALSPRVPSISIS</sequence>
<evidence type="ECO:0000255" key="1">
    <source>
        <dbReference type="HAMAP-Rule" id="MF_01201"/>
    </source>
</evidence>
<dbReference type="EC" id="5.1.1.1" evidence="1"/>
<dbReference type="EMBL" id="CP000450">
    <property type="protein sequence ID" value="ABI59775.1"/>
    <property type="molecule type" value="Genomic_DNA"/>
</dbReference>
<dbReference type="RefSeq" id="WP_011634581.1">
    <property type="nucleotide sequence ID" value="NC_008344.1"/>
</dbReference>
<dbReference type="SMR" id="Q0AFV7"/>
<dbReference type="STRING" id="335283.Neut_1531"/>
<dbReference type="KEGG" id="net:Neut_1531"/>
<dbReference type="eggNOG" id="COG0787">
    <property type="taxonomic scope" value="Bacteria"/>
</dbReference>
<dbReference type="HOGENOM" id="CLU_028393_1_0_4"/>
<dbReference type="OrthoDB" id="9813814at2"/>
<dbReference type="UniPathway" id="UPA00042">
    <property type="reaction ID" value="UER00497"/>
</dbReference>
<dbReference type="Proteomes" id="UP000001966">
    <property type="component" value="Chromosome"/>
</dbReference>
<dbReference type="GO" id="GO:0005829">
    <property type="term" value="C:cytosol"/>
    <property type="evidence" value="ECO:0007669"/>
    <property type="project" value="TreeGrafter"/>
</dbReference>
<dbReference type="GO" id="GO:0008784">
    <property type="term" value="F:alanine racemase activity"/>
    <property type="evidence" value="ECO:0007669"/>
    <property type="project" value="UniProtKB-UniRule"/>
</dbReference>
<dbReference type="GO" id="GO:0030170">
    <property type="term" value="F:pyridoxal phosphate binding"/>
    <property type="evidence" value="ECO:0007669"/>
    <property type="project" value="UniProtKB-UniRule"/>
</dbReference>
<dbReference type="GO" id="GO:0030632">
    <property type="term" value="P:D-alanine biosynthetic process"/>
    <property type="evidence" value="ECO:0007669"/>
    <property type="project" value="UniProtKB-UniRule"/>
</dbReference>
<dbReference type="CDD" id="cd06827">
    <property type="entry name" value="PLPDE_III_AR_proteobact"/>
    <property type="match status" value="1"/>
</dbReference>
<dbReference type="FunFam" id="2.40.37.10:FF:000002">
    <property type="entry name" value="Alanine racemase"/>
    <property type="match status" value="1"/>
</dbReference>
<dbReference type="FunFam" id="3.20.20.10:FF:000002">
    <property type="entry name" value="Alanine racemase"/>
    <property type="match status" value="1"/>
</dbReference>
<dbReference type="Gene3D" id="3.20.20.10">
    <property type="entry name" value="Alanine racemase"/>
    <property type="match status" value="1"/>
</dbReference>
<dbReference type="Gene3D" id="2.40.37.10">
    <property type="entry name" value="Lyase, Ornithine Decarboxylase, Chain A, domain 1"/>
    <property type="match status" value="1"/>
</dbReference>
<dbReference type="HAMAP" id="MF_01201">
    <property type="entry name" value="Ala_racemase"/>
    <property type="match status" value="1"/>
</dbReference>
<dbReference type="InterPro" id="IPR000821">
    <property type="entry name" value="Ala_racemase"/>
</dbReference>
<dbReference type="InterPro" id="IPR009006">
    <property type="entry name" value="Ala_racemase/Decarboxylase_C"/>
</dbReference>
<dbReference type="InterPro" id="IPR011079">
    <property type="entry name" value="Ala_racemase_C"/>
</dbReference>
<dbReference type="InterPro" id="IPR001608">
    <property type="entry name" value="Ala_racemase_N"/>
</dbReference>
<dbReference type="InterPro" id="IPR020622">
    <property type="entry name" value="Ala_racemase_pyridoxalP-BS"/>
</dbReference>
<dbReference type="InterPro" id="IPR029066">
    <property type="entry name" value="PLP-binding_barrel"/>
</dbReference>
<dbReference type="NCBIfam" id="TIGR00492">
    <property type="entry name" value="alr"/>
    <property type="match status" value="1"/>
</dbReference>
<dbReference type="PANTHER" id="PTHR30511">
    <property type="entry name" value="ALANINE RACEMASE"/>
    <property type="match status" value="1"/>
</dbReference>
<dbReference type="PANTHER" id="PTHR30511:SF0">
    <property type="entry name" value="ALANINE RACEMASE, CATABOLIC-RELATED"/>
    <property type="match status" value="1"/>
</dbReference>
<dbReference type="Pfam" id="PF00842">
    <property type="entry name" value="Ala_racemase_C"/>
    <property type="match status" value="1"/>
</dbReference>
<dbReference type="Pfam" id="PF01168">
    <property type="entry name" value="Ala_racemase_N"/>
    <property type="match status" value="1"/>
</dbReference>
<dbReference type="PRINTS" id="PR00992">
    <property type="entry name" value="ALARACEMASE"/>
</dbReference>
<dbReference type="SMART" id="SM01005">
    <property type="entry name" value="Ala_racemase_C"/>
    <property type="match status" value="1"/>
</dbReference>
<dbReference type="SUPFAM" id="SSF50621">
    <property type="entry name" value="Alanine racemase C-terminal domain-like"/>
    <property type="match status" value="1"/>
</dbReference>
<dbReference type="SUPFAM" id="SSF51419">
    <property type="entry name" value="PLP-binding barrel"/>
    <property type="match status" value="1"/>
</dbReference>
<dbReference type="PROSITE" id="PS00395">
    <property type="entry name" value="ALANINE_RACEMASE"/>
    <property type="match status" value="1"/>
</dbReference>
<protein>
    <recommendedName>
        <fullName evidence="1">Alanine racemase</fullName>
        <ecNumber evidence="1">5.1.1.1</ecNumber>
    </recommendedName>
</protein>
<proteinExistence type="inferred from homology"/>
<organism>
    <name type="scientific">Nitrosomonas eutropha (strain DSM 101675 / C91 / Nm57)</name>
    <dbReference type="NCBI Taxonomy" id="335283"/>
    <lineage>
        <taxon>Bacteria</taxon>
        <taxon>Pseudomonadati</taxon>
        <taxon>Pseudomonadota</taxon>
        <taxon>Betaproteobacteria</taxon>
        <taxon>Nitrosomonadales</taxon>
        <taxon>Nitrosomonadaceae</taxon>
        <taxon>Nitrosomonas</taxon>
    </lineage>
</organism>
<keyword id="KW-0413">Isomerase</keyword>
<keyword id="KW-0663">Pyridoxal phosphate</keyword>
<comment type="function">
    <text evidence="1">Catalyzes the interconversion of L-alanine and D-alanine. May also act on other amino acids.</text>
</comment>
<comment type="catalytic activity">
    <reaction evidence="1">
        <text>L-alanine = D-alanine</text>
        <dbReference type="Rhea" id="RHEA:20249"/>
        <dbReference type="ChEBI" id="CHEBI:57416"/>
        <dbReference type="ChEBI" id="CHEBI:57972"/>
        <dbReference type="EC" id="5.1.1.1"/>
    </reaction>
</comment>
<comment type="cofactor">
    <cofactor evidence="1">
        <name>pyridoxal 5'-phosphate</name>
        <dbReference type="ChEBI" id="CHEBI:597326"/>
    </cofactor>
</comment>
<comment type="pathway">
    <text evidence="1">Amino-acid biosynthesis; D-alanine biosynthesis; D-alanine from L-alanine: step 1/1.</text>
</comment>
<comment type="similarity">
    <text evidence="1">Belongs to the alanine racemase family.</text>
</comment>
<name>ALR_NITEC</name>
<gene>
    <name type="primary">alr</name>
    <name type="ordered locus">Neut_1531</name>
</gene>
<feature type="chain" id="PRO_1000066017" description="Alanine racemase">
    <location>
        <begin position="1"/>
        <end position="361"/>
    </location>
</feature>
<feature type="active site" description="Proton acceptor; specific for D-alanine" evidence="1">
    <location>
        <position position="35"/>
    </location>
</feature>
<feature type="active site" description="Proton acceptor; specific for L-alanine" evidence="1">
    <location>
        <position position="257"/>
    </location>
</feature>
<feature type="binding site" evidence="1">
    <location>
        <position position="130"/>
    </location>
    <ligand>
        <name>substrate</name>
    </ligand>
</feature>
<feature type="binding site" evidence="1">
    <location>
        <position position="305"/>
    </location>
    <ligand>
        <name>substrate</name>
    </ligand>
</feature>
<feature type="modified residue" description="N6-(pyridoxal phosphate)lysine" evidence="1">
    <location>
        <position position="35"/>
    </location>
</feature>
<reference key="1">
    <citation type="journal article" date="2007" name="Environ. Microbiol.">
        <title>Whole-genome analysis of the ammonia-oxidizing bacterium, Nitrosomonas eutropha C91: implications for niche adaptation.</title>
        <authorList>
            <person name="Stein L.Y."/>
            <person name="Arp D.J."/>
            <person name="Berube P.M."/>
            <person name="Chain P.S."/>
            <person name="Hauser L."/>
            <person name="Jetten M.S."/>
            <person name="Klotz M.G."/>
            <person name="Larimer F.W."/>
            <person name="Norton J.M."/>
            <person name="Op den Camp H.J.M."/>
            <person name="Shin M."/>
            <person name="Wei X."/>
        </authorList>
    </citation>
    <scope>NUCLEOTIDE SEQUENCE [LARGE SCALE GENOMIC DNA]</scope>
    <source>
        <strain>DSM 101675 / C91 / Nm57</strain>
    </source>
</reference>